<feature type="chain" id="PRO_0000205177" description="Nuclear factor of activated T-cells, cytoplasmic 1">
    <location>
        <begin position="1"/>
        <end position="822"/>
    </location>
</feature>
<feature type="repeat" description="1">
    <location>
        <begin position="195"/>
        <end position="211"/>
    </location>
</feature>
<feature type="repeat" description="2">
    <location>
        <begin position="225"/>
        <end position="241"/>
    </location>
</feature>
<feature type="repeat" description="3">
    <location>
        <begin position="274"/>
        <end position="290"/>
    </location>
</feature>
<feature type="domain" description="RHD" evidence="4">
    <location>
        <begin position="400"/>
        <end position="582"/>
    </location>
</feature>
<feature type="DNA-binding region" evidence="3">
    <location>
        <begin position="429"/>
        <end position="436"/>
    </location>
</feature>
<feature type="region of interest" description="Calcineurin-binding">
    <location>
        <begin position="110"/>
        <end position="115"/>
    </location>
</feature>
<feature type="region of interest" description="Transactivation domain A (TAD-A)">
    <location>
        <begin position="118"/>
        <end position="210"/>
    </location>
</feature>
<feature type="region of interest" description="Disordered" evidence="5">
    <location>
        <begin position="192"/>
        <end position="289"/>
    </location>
</feature>
<feature type="region of interest" description="3 X SP repeats">
    <location>
        <begin position="195"/>
        <end position="290"/>
    </location>
</feature>
<feature type="region of interest" description="Disordered" evidence="5">
    <location>
        <begin position="772"/>
        <end position="822"/>
    </location>
</feature>
<feature type="short sequence motif" description="Nuclear localization signal">
    <location>
        <begin position="257"/>
        <end position="259"/>
    </location>
</feature>
<feature type="short sequence motif" description="Nuclear export signal">
    <location>
        <begin position="302"/>
        <end position="313"/>
    </location>
</feature>
<feature type="short sequence motif" description="Nuclear localization signal">
    <location>
        <begin position="672"/>
        <end position="674"/>
    </location>
</feature>
<feature type="compositionally biased region" description="Polar residues" evidence="5">
    <location>
        <begin position="192"/>
        <end position="206"/>
    </location>
</feature>
<feature type="compositionally biased region" description="Low complexity" evidence="5">
    <location>
        <begin position="225"/>
        <end position="242"/>
    </location>
</feature>
<feature type="compositionally biased region" description="Polar residues" evidence="5">
    <location>
        <begin position="808"/>
        <end position="822"/>
    </location>
</feature>
<feature type="modified residue" description="Phosphoserine" evidence="3">
    <location>
        <position position="225"/>
    </location>
</feature>
<feature type="modified residue" description="Phosphoserine" evidence="2">
    <location>
        <position position="229"/>
    </location>
</feature>
<feature type="modified residue" description="Phosphoserine; by PKA" evidence="3">
    <location>
        <position position="237"/>
    </location>
</feature>
<feature type="modified residue" description="Phosphoserine; by PKA" evidence="3">
    <location>
        <position position="286"/>
    </location>
</feature>
<evidence type="ECO:0000250" key="1"/>
<evidence type="ECO:0000250" key="2">
    <source>
        <dbReference type="UniProtKB" id="O88942"/>
    </source>
</evidence>
<evidence type="ECO:0000250" key="3">
    <source>
        <dbReference type="UniProtKB" id="O95644"/>
    </source>
</evidence>
<evidence type="ECO:0000255" key="4">
    <source>
        <dbReference type="PROSITE-ProRule" id="PRU00265"/>
    </source>
</evidence>
<evidence type="ECO:0000256" key="5">
    <source>
        <dbReference type="SAM" id="MobiDB-lite"/>
    </source>
</evidence>
<sequence length="822" mass="88010">MTGLEEDQEFDFDFLFEFNQSDEGAAAAGATAERYSYATTGISSALPLPTAPPTLPAPCHDQQASAAGISAVGSAGHPAGYAGAVDGGPSGYFLPSGGVRPNGAPALESPRIEITSYLGLHHNNGQFFHDVAVEDVLPNPRRSPSTATLSLPNLEAYRDPSCLSPASSLSSRSCNSEASSYESSFSYPYASPQTSPWQSPCVSPKTTDPEEGFPRGLGACSLLGSPRHSPSTSPRTSVTEESWLGARTSRPSSPCNKRKYGLNGRQLFCSPHASPTPSPHSSPRVSVTDDTWLGNTTQYTSSAIVAAINALSTDSSLDLGDGVPVKARKTALDHSPSLALKVEPAAEDLGATPPTSDFPPEEFPPFQHIRKGAFCDQYLSVPQHPYPWARPRSPTPYASPSLPALDWQLPSHSGPYELRIEVQPKSHHRAHYETEGSRGAVKASAGGHPSVQLHGYVESEPLTLQLFIGTADDRLLRPHAFYQVHRITGKTVSTTSHEAVLSNTKVLEIPLLPENNMRAIIDCAGILKLRNSDIELRKGETDIGRKNTRVRLVFRVHIPQPNGRTLSLQVASNPIECSQRSAQELPLVEKQSAASCPVLGGKRMVLTGHNFLQDSKVVFVEKAPDGHHIWEMEAKTDGDLCKPNSLVVEIPPFRNQRITSPVQVNFYVCNGKRKRSQYQHFTYLPANAPVIKTEPSDDYEPALTCGPVSQGLNPLTKPCYGPPLALPPDPSSCLVAGFPPCPQRSAVMSPPPSASPKLHDLSCAPYSKGMAGPGHLGLQRPAGGVLGGQEAPRPGGPHPGAPQLHPLNLSQSIVTRLTEPQP</sequence>
<comment type="function">
    <text evidence="2 3">Plays a role in the inducible expression of cytokine genes in T-cells, especially in the induction of the IL-2 or IL-4 gene transcription. Also controls gene expression in embryonic cardiac cells. Could regulate not only the activation and proliferation but also the differentiation and programmed death of T-lymphocytes as well as lymphoid and non-lymphoid cells. Required for osteoclastogenesis and regulates many genes important for osteoclast differentiation and function.</text>
</comment>
<comment type="subunit">
    <text evidence="1 2 3">Member of the multicomponent NFATC transcription complex that consists of at least two components, a pre-existing cytoplasmic component NFATC2 and an inducible nuclear component NFATC1. Other members such as NFATC4, NFATC3 or members of the activating protein-1 family, MAF, GATA4 and Cbp/p300 can also bind the complex. NFATC proteins bind to DNA as monomers (By similarity). Interacts with HOMER2 and HOMER3; this interaction may compete with calcineurin/PPP3CA-binding and hence prevent NFATC1 dephosphorylation and activation (By similarity). Interacts with TLE6/GRG6 (By similarity).</text>
</comment>
<comment type="subcellular location">
    <subcellularLocation>
        <location evidence="3">Cytoplasm</location>
    </subcellularLocation>
    <subcellularLocation>
        <location evidence="3">Nucleus</location>
    </subcellularLocation>
    <text evidence="2 3">Cytoplasmic for the phosphorylated form and nuclear after activation that is controlled by calcineurin-mediated dephosphorylation. Rapid nuclear exit of NFATC is thought to be one mechanism by which cells distinguish between sustained and transient calcium signals. Translocation to the nucleus is increased in the presence of calcium in pre-osteoblasts (By similarity). The subcellular localization of NFATC plays a key role in the regulation of gene transcription. Nuclear translocation OF NFATC1 is enhanced in the presence of TNFSF11. Nuclear translocation is decreased in the presence of FBN1 which can bind and sequester TNFSF11.</text>
</comment>
<comment type="domain">
    <text evidence="1">Rel Similarity Domain (RSD) allows DNA-binding and cooperative interactions with AP1 factors.</text>
</comment>
<comment type="domain">
    <text evidence="1">The N-terminal transactivation domain (TAD-A) binds to and is activated by Cbp/p300. The dephosphorylated form contains two unmasked nuclear localization signals (NLS), which allow translocation of the protein to the nucleus (By similarity).</text>
</comment>
<comment type="PTM">
    <text evidence="1">Phosphorylated by NFATC-kinase and GSK3B; phosphorylation induces NFATC1 nuclear exit and dephosphorylation by calcineurin promotes nuclear import. Phosphorylation by PKA and DYRK2 negatively modulates nuclear accumulation, and promotes subsequent phosphorylation by GSK3B or casein kinase 1 (By similarity).</text>
</comment>
<name>NFAC1_PIG</name>
<keyword id="KW-0010">Activator</keyword>
<keyword id="KW-0963">Cytoplasm</keyword>
<keyword id="KW-0238">DNA-binding</keyword>
<keyword id="KW-0539">Nucleus</keyword>
<keyword id="KW-0597">Phosphoprotein</keyword>
<keyword id="KW-1185">Reference proteome</keyword>
<keyword id="KW-0677">Repeat</keyword>
<keyword id="KW-0804">Transcription</keyword>
<keyword id="KW-0805">Transcription regulation</keyword>
<accession>O77638</accession>
<reference key="1">
    <citation type="journal article" date="1998" name="Science">
        <title>A viral mechanism for inhibition of the cellular phosphatase calcineurin.</title>
        <authorList>
            <person name="Miskin J.E."/>
            <person name="Abrams C.C."/>
            <person name="Goatley L.C."/>
            <person name="Dixon L.K."/>
        </authorList>
    </citation>
    <scope>NUCLEOTIDE SEQUENCE [MRNA]</scope>
    <source>
        <tissue>Alveolar macrophage</tissue>
    </source>
</reference>
<protein>
    <recommendedName>
        <fullName>Nuclear factor of activated T-cells, cytoplasmic 1</fullName>
        <shortName>NF-ATc1</shortName>
        <shortName>NFATc1</shortName>
    </recommendedName>
    <alternativeName>
        <fullName>NFAT transcription complex cytosolic component</fullName>
        <shortName>NF-ATc</shortName>
        <shortName>NFATc</shortName>
    </alternativeName>
    <alternativeName>
        <fullName>NFATmac</fullName>
    </alternativeName>
</protein>
<organism>
    <name type="scientific">Sus scrofa</name>
    <name type="common">Pig</name>
    <dbReference type="NCBI Taxonomy" id="9823"/>
    <lineage>
        <taxon>Eukaryota</taxon>
        <taxon>Metazoa</taxon>
        <taxon>Chordata</taxon>
        <taxon>Craniata</taxon>
        <taxon>Vertebrata</taxon>
        <taxon>Euteleostomi</taxon>
        <taxon>Mammalia</taxon>
        <taxon>Eutheria</taxon>
        <taxon>Laurasiatheria</taxon>
        <taxon>Artiodactyla</taxon>
        <taxon>Suina</taxon>
        <taxon>Suidae</taxon>
        <taxon>Sus</taxon>
    </lineage>
</organism>
<gene>
    <name type="primary">NFATC1</name>
    <name type="synonym">NFAT2</name>
    <name type="synonym">NFATC</name>
</gene>
<dbReference type="EMBL" id="AF069996">
    <property type="protein sequence ID" value="AAC27301.2"/>
    <property type="molecule type" value="mRNA"/>
</dbReference>
<dbReference type="RefSeq" id="NP_999326.1">
    <property type="nucleotide sequence ID" value="NM_214161.1"/>
</dbReference>
<dbReference type="SMR" id="O77638"/>
<dbReference type="ELM" id="O77638"/>
<dbReference type="FunCoup" id="O77638">
    <property type="interactions" value="362"/>
</dbReference>
<dbReference type="STRING" id="9823.ENSSSCP00000040717"/>
<dbReference type="GlyGen" id="O77638">
    <property type="glycosylation" value="1 site"/>
</dbReference>
<dbReference type="PaxDb" id="9823-ENSSSCP00000005229"/>
<dbReference type="GeneID" id="397318"/>
<dbReference type="KEGG" id="ssc:397318"/>
<dbReference type="CTD" id="4772"/>
<dbReference type="eggNOG" id="ENOG502QTX8">
    <property type="taxonomic scope" value="Eukaryota"/>
</dbReference>
<dbReference type="InParanoid" id="O77638"/>
<dbReference type="OrthoDB" id="5346094at2759"/>
<dbReference type="Proteomes" id="UP000008227">
    <property type="component" value="Unplaced"/>
</dbReference>
<dbReference type="Proteomes" id="UP000314985">
    <property type="component" value="Unplaced"/>
</dbReference>
<dbReference type="Proteomes" id="UP000694570">
    <property type="component" value="Unplaced"/>
</dbReference>
<dbReference type="Proteomes" id="UP000694571">
    <property type="component" value="Unplaced"/>
</dbReference>
<dbReference type="Proteomes" id="UP000694720">
    <property type="component" value="Unplaced"/>
</dbReference>
<dbReference type="Proteomes" id="UP000694722">
    <property type="component" value="Unplaced"/>
</dbReference>
<dbReference type="Proteomes" id="UP000694723">
    <property type="component" value="Unplaced"/>
</dbReference>
<dbReference type="Proteomes" id="UP000694724">
    <property type="component" value="Unplaced"/>
</dbReference>
<dbReference type="Proteomes" id="UP000694725">
    <property type="component" value="Unplaced"/>
</dbReference>
<dbReference type="Proteomes" id="UP000694726">
    <property type="component" value="Unplaced"/>
</dbReference>
<dbReference type="Proteomes" id="UP000694727">
    <property type="component" value="Unplaced"/>
</dbReference>
<dbReference type="Proteomes" id="UP000694728">
    <property type="component" value="Unplaced"/>
</dbReference>
<dbReference type="GO" id="GO:0005737">
    <property type="term" value="C:cytoplasm"/>
    <property type="evidence" value="ECO:0000250"/>
    <property type="project" value="UniProtKB"/>
</dbReference>
<dbReference type="GO" id="GO:0005634">
    <property type="term" value="C:nucleus"/>
    <property type="evidence" value="ECO:0000250"/>
    <property type="project" value="UniProtKB"/>
</dbReference>
<dbReference type="GO" id="GO:0005667">
    <property type="term" value="C:transcription regulator complex"/>
    <property type="evidence" value="ECO:0000318"/>
    <property type="project" value="GO_Central"/>
</dbReference>
<dbReference type="GO" id="GO:0000981">
    <property type="term" value="F:DNA-binding transcription factor activity, RNA polymerase II-specific"/>
    <property type="evidence" value="ECO:0000318"/>
    <property type="project" value="GO_Central"/>
</dbReference>
<dbReference type="GO" id="GO:0000978">
    <property type="term" value="F:RNA polymerase II cis-regulatory region sequence-specific DNA binding"/>
    <property type="evidence" value="ECO:0000318"/>
    <property type="project" value="GO_Central"/>
</dbReference>
<dbReference type="GO" id="GO:0033173">
    <property type="term" value="P:calcineurin-NFAT signaling cascade"/>
    <property type="evidence" value="ECO:0000318"/>
    <property type="project" value="GO_Central"/>
</dbReference>
<dbReference type="GO" id="GO:0045944">
    <property type="term" value="P:positive regulation of transcription by RNA polymerase II"/>
    <property type="evidence" value="ECO:0000318"/>
    <property type="project" value="GO_Central"/>
</dbReference>
<dbReference type="CDD" id="cd07881">
    <property type="entry name" value="RHD-n_NFAT"/>
    <property type="match status" value="1"/>
</dbReference>
<dbReference type="FunFam" id="2.60.40.10:FF:000040">
    <property type="entry name" value="Nuclear factor of activated T-cells, cytoplasmic, calcineurin-dependent 2"/>
    <property type="match status" value="1"/>
</dbReference>
<dbReference type="FunFam" id="2.60.40.340:FF:000001">
    <property type="entry name" value="Nuclear factor of activated T-cells, cytoplasmic, calcineurin-dependent 2"/>
    <property type="match status" value="1"/>
</dbReference>
<dbReference type="Gene3D" id="2.60.40.10">
    <property type="entry name" value="Immunoglobulins"/>
    <property type="match status" value="1"/>
</dbReference>
<dbReference type="Gene3D" id="2.60.40.340">
    <property type="entry name" value="Rel homology domain (RHD), DNA-binding domain"/>
    <property type="match status" value="1"/>
</dbReference>
<dbReference type="InterPro" id="IPR013783">
    <property type="entry name" value="Ig-like_fold"/>
</dbReference>
<dbReference type="InterPro" id="IPR014756">
    <property type="entry name" value="Ig_E-set"/>
</dbReference>
<dbReference type="InterPro" id="IPR002909">
    <property type="entry name" value="IPT_dom"/>
</dbReference>
<dbReference type="InterPro" id="IPR008366">
    <property type="entry name" value="NFAT"/>
</dbReference>
<dbReference type="InterPro" id="IPR008967">
    <property type="entry name" value="p53-like_TF_DNA-bd_sf"/>
</dbReference>
<dbReference type="InterPro" id="IPR032397">
    <property type="entry name" value="RHD_dimer"/>
</dbReference>
<dbReference type="InterPro" id="IPR011539">
    <property type="entry name" value="RHD_DNA_bind_dom"/>
</dbReference>
<dbReference type="InterPro" id="IPR037059">
    <property type="entry name" value="RHD_DNA_bind_dom_sf"/>
</dbReference>
<dbReference type="PANTHER" id="PTHR12533">
    <property type="entry name" value="NFAT"/>
    <property type="match status" value="1"/>
</dbReference>
<dbReference type="PANTHER" id="PTHR12533:SF5">
    <property type="entry name" value="NUCLEAR FACTOR OF ACTIVATED T-CELLS, CYTOPLASMIC 1"/>
    <property type="match status" value="1"/>
</dbReference>
<dbReference type="Pfam" id="PF16179">
    <property type="entry name" value="RHD_dimer"/>
    <property type="match status" value="1"/>
</dbReference>
<dbReference type="Pfam" id="PF00554">
    <property type="entry name" value="RHD_DNA_bind"/>
    <property type="match status" value="1"/>
</dbReference>
<dbReference type="PRINTS" id="PR01789">
    <property type="entry name" value="NUCFACTORATC"/>
</dbReference>
<dbReference type="SMART" id="SM00429">
    <property type="entry name" value="IPT"/>
    <property type="match status" value="1"/>
</dbReference>
<dbReference type="SUPFAM" id="SSF81296">
    <property type="entry name" value="E set domains"/>
    <property type="match status" value="1"/>
</dbReference>
<dbReference type="SUPFAM" id="SSF49417">
    <property type="entry name" value="p53-like transcription factors"/>
    <property type="match status" value="1"/>
</dbReference>
<dbReference type="PROSITE" id="PS50254">
    <property type="entry name" value="REL_2"/>
    <property type="match status" value="1"/>
</dbReference>
<proteinExistence type="evidence at transcript level"/>